<name>RL24_GEOMG</name>
<protein>
    <recommendedName>
        <fullName evidence="1">Large ribosomal subunit protein uL24</fullName>
    </recommendedName>
    <alternativeName>
        <fullName evidence="2">50S ribosomal protein L24</fullName>
    </alternativeName>
</protein>
<organism>
    <name type="scientific">Geobacter metallireducens (strain ATCC 53774 / DSM 7210 / GS-15)</name>
    <dbReference type="NCBI Taxonomy" id="269799"/>
    <lineage>
        <taxon>Bacteria</taxon>
        <taxon>Pseudomonadati</taxon>
        <taxon>Thermodesulfobacteriota</taxon>
        <taxon>Desulfuromonadia</taxon>
        <taxon>Geobacterales</taxon>
        <taxon>Geobacteraceae</taxon>
        <taxon>Geobacter</taxon>
    </lineage>
</organism>
<gene>
    <name evidence="1" type="primary">rplX</name>
    <name type="ordered locus">Gmet_0637</name>
</gene>
<feature type="chain" id="PRO_0000241604" description="Large ribosomal subunit protein uL24">
    <location>
        <begin position="1"/>
        <end position="108"/>
    </location>
</feature>
<evidence type="ECO:0000255" key="1">
    <source>
        <dbReference type="HAMAP-Rule" id="MF_01326"/>
    </source>
</evidence>
<evidence type="ECO:0000305" key="2"/>
<sequence length="108" mass="12077">MLDKKFHVKKGDTVSVIAGKDKSKTGKVIRILPKKDGVLVEGLNMVKRHMRARGNEPGGIVEKENPLHVSNVMLYCDKCKKPVRSKMNVLEDGKKVRVCIKCGDSFDK</sequence>
<comment type="function">
    <text evidence="1">One of two assembly initiator proteins, it binds directly to the 5'-end of the 23S rRNA, where it nucleates assembly of the 50S subunit.</text>
</comment>
<comment type="function">
    <text evidence="1">One of the proteins that surrounds the polypeptide exit tunnel on the outside of the subunit.</text>
</comment>
<comment type="subunit">
    <text evidence="1">Part of the 50S ribosomal subunit.</text>
</comment>
<comment type="similarity">
    <text evidence="1">Belongs to the universal ribosomal protein uL24 family.</text>
</comment>
<accession>Q39XZ5</accession>
<keyword id="KW-1185">Reference proteome</keyword>
<keyword id="KW-0687">Ribonucleoprotein</keyword>
<keyword id="KW-0689">Ribosomal protein</keyword>
<keyword id="KW-0694">RNA-binding</keyword>
<keyword id="KW-0699">rRNA-binding</keyword>
<dbReference type="EMBL" id="CP000148">
    <property type="protein sequence ID" value="ABB30879.1"/>
    <property type="molecule type" value="Genomic_DNA"/>
</dbReference>
<dbReference type="RefSeq" id="WP_004514247.1">
    <property type="nucleotide sequence ID" value="NC_007517.1"/>
</dbReference>
<dbReference type="SMR" id="Q39XZ5"/>
<dbReference type="STRING" id="269799.Gmet_0637"/>
<dbReference type="KEGG" id="gme:Gmet_0637"/>
<dbReference type="eggNOG" id="COG0198">
    <property type="taxonomic scope" value="Bacteria"/>
</dbReference>
<dbReference type="HOGENOM" id="CLU_093315_2_3_7"/>
<dbReference type="Proteomes" id="UP000007073">
    <property type="component" value="Chromosome"/>
</dbReference>
<dbReference type="GO" id="GO:1990904">
    <property type="term" value="C:ribonucleoprotein complex"/>
    <property type="evidence" value="ECO:0007669"/>
    <property type="project" value="UniProtKB-KW"/>
</dbReference>
<dbReference type="GO" id="GO:0005840">
    <property type="term" value="C:ribosome"/>
    <property type="evidence" value="ECO:0007669"/>
    <property type="project" value="UniProtKB-KW"/>
</dbReference>
<dbReference type="GO" id="GO:0019843">
    <property type="term" value="F:rRNA binding"/>
    <property type="evidence" value="ECO:0007669"/>
    <property type="project" value="UniProtKB-UniRule"/>
</dbReference>
<dbReference type="GO" id="GO:0003735">
    <property type="term" value="F:structural constituent of ribosome"/>
    <property type="evidence" value="ECO:0007669"/>
    <property type="project" value="InterPro"/>
</dbReference>
<dbReference type="GO" id="GO:0006412">
    <property type="term" value="P:translation"/>
    <property type="evidence" value="ECO:0007669"/>
    <property type="project" value="UniProtKB-UniRule"/>
</dbReference>
<dbReference type="CDD" id="cd06089">
    <property type="entry name" value="KOW_RPL26"/>
    <property type="match status" value="1"/>
</dbReference>
<dbReference type="FunFam" id="2.30.30.30:FF:000004">
    <property type="entry name" value="50S ribosomal protein L24"/>
    <property type="match status" value="1"/>
</dbReference>
<dbReference type="Gene3D" id="2.30.30.30">
    <property type="match status" value="1"/>
</dbReference>
<dbReference type="HAMAP" id="MF_01326_B">
    <property type="entry name" value="Ribosomal_uL24_B"/>
    <property type="match status" value="1"/>
</dbReference>
<dbReference type="InterPro" id="IPR005824">
    <property type="entry name" value="KOW"/>
</dbReference>
<dbReference type="InterPro" id="IPR014722">
    <property type="entry name" value="Rib_uL2_dom2"/>
</dbReference>
<dbReference type="InterPro" id="IPR003256">
    <property type="entry name" value="Ribosomal_uL24"/>
</dbReference>
<dbReference type="InterPro" id="IPR041988">
    <property type="entry name" value="Ribosomal_uL24_KOW"/>
</dbReference>
<dbReference type="InterPro" id="IPR008991">
    <property type="entry name" value="Translation_prot_SH3-like_sf"/>
</dbReference>
<dbReference type="NCBIfam" id="TIGR01079">
    <property type="entry name" value="rplX_bact"/>
    <property type="match status" value="1"/>
</dbReference>
<dbReference type="PANTHER" id="PTHR12903">
    <property type="entry name" value="MITOCHONDRIAL RIBOSOMAL PROTEIN L24"/>
    <property type="match status" value="1"/>
</dbReference>
<dbReference type="Pfam" id="PF00467">
    <property type="entry name" value="KOW"/>
    <property type="match status" value="1"/>
</dbReference>
<dbReference type="Pfam" id="PF17136">
    <property type="entry name" value="ribosomal_L24"/>
    <property type="match status" value="1"/>
</dbReference>
<dbReference type="SMART" id="SM00739">
    <property type="entry name" value="KOW"/>
    <property type="match status" value="1"/>
</dbReference>
<dbReference type="SUPFAM" id="SSF50104">
    <property type="entry name" value="Translation proteins SH3-like domain"/>
    <property type="match status" value="1"/>
</dbReference>
<proteinExistence type="inferred from homology"/>
<reference key="1">
    <citation type="journal article" date="2009" name="BMC Microbiol.">
        <title>The genome sequence of Geobacter metallireducens: features of metabolism, physiology and regulation common and dissimilar to Geobacter sulfurreducens.</title>
        <authorList>
            <person name="Aklujkar M."/>
            <person name="Krushkal J."/>
            <person name="DiBartolo G."/>
            <person name="Lapidus A."/>
            <person name="Land M.L."/>
            <person name="Lovley D.R."/>
        </authorList>
    </citation>
    <scope>NUCLEOTIDE SEQUENCE [LARGE SCALE GENOMIC DNA]</scope>
    <source>
        <strain>ATCC 53774 / DSM 7210 / GS-15</strain>
    </source>
</reference>